<organism>
    <name type="scientific">Salmonella typhimurium (strain LT2 / SGSC1412 / ATCC 700720)</name>
    <dbReference type="NCBI Taxonomy" id="99287"/>
    <lineage>
        <taxon>Bacteria</taxon>
        <taxon>Pseudomonadati</taxon>
        <taxon>Pseudomonadota</taxon>
        <taxon>Gammaproteobacteria</taxon>
        <taxon>Enterobacterales</taxon>
        <taxon>Enterobacteriaceae</taxon>
        <taxon>Salmonella</taxon>
    </lineage>
</organism>
<sequence length="227" mass="25509">MLTVPGLCWLCRMPLALSHWGICSVCARAVRQRVSLCPQCGLPAAHPSLPCGRCLQKPPPWQRLVSVSDYTPPLSLLVHQLKFTRRSEIAAALARLLLQEVLMARRSTGLQLPDRIVSVPLWSRRHWRRGFNQSDLLCQPLAHWLGCAWDSQTITRVRATATQHHLSARLRKRNLKNAFRLELPVQGLHMVIVDDVVTTGSTVAEIAQLLLRNGAATVQVWCLCRTL</sequence>
<accession>Q8ZLI8</accession>
<dbReference type="EMBL" id="AE006468">
    <property type="protein sequence ID" value="AAL22372.1"/>
    <property type="molecule type" value="Genomic_DNA"/>
</dbReference>
<dbReference type="RefSeq" id="WP_000958732.1">
    <property type="nucleotide sequence ID" value="NC_003197.2"/>
</dbReference>
<dbReference type="STRING" id="99287.STM3510"/>
<dbReference type="PaxDb" id="99287-STM3510"/>
<dbReference type="KEGG" id="stm:STM3510"/>
<dbReference type="PATRIC" id="fig|99287.12.peg.3710"/>
<dbReference type="HOGENOM" id="CLU_054549_0_2_6"/>
<dbReference type="OMA" id="DAAYWNE"/>
<dbReference type="PhylomeDB" id="Q8ZLI8"/>
<dbReference type="BioCyc" id="SENT99287:STM3510-MONOMER"/>
<dbReference type="Proteomes" id="UP000001014">
    <property type="component" value="Chromosome"/>
</dbReference>
<dbReference type="CDD" id="cd06223">
    <property type="entry name" value="PRTases_typeI"/>
    <property type="match status" value="1"/>
</dbReference>
<dbReference type="FunFam" id="3.40.50.2020:FF:000054">
    <property type="entry name" value="ComF family protein"/>
    <property type="match status" value="1"/>
</dbReference>
<dbReference type="Gene3D" id="3.40.50.2020">
    <property type="match status" value="1"/>
</dbReference>
<dbReference type="InterPro" id="IPR051910">
    <property type="entry name" value="ComF/GntX_DNA_util-trans"/>
</dbReference>
<dbReference type="InterPro" id="IPR005222">
    <property type="entry name" value="Competence_ComF"/>
</dbReference>
<dbReference type="InterPro" id="IPR000836">
    <property type="entry name" value="PRibTrfase_dom"/>
</dbReference>
<dbReference type="InterPro" id="IPR029057">
    <property type="entry name" value="PRTase-like"/>
</dbReference>
<dbReference type="NCBIfam" id="TIGR00201">
    <property type="entry name" value="comF"/>
    <property type="match status" value="1"/>
</dbReference>
<dbReference type="NCBIfam" id="NF008616">
    <property type="entry name" value="PRK11595.1"/>
    <property type="match status" value="1"/>
</dbReference>
<dbReference type="PANTHER" id="PTHR47505">
    <property type="entry name" value="DNA UTILIZATION PROTEIN YHGH"/>
    <property type="match status" value="1"/>
</dbReference>
<dbReference type="PANTHER" id="PTHR47505:SF1">
    <property type="entry name" value="DNA UTILIZATION PROTEIN YHGH"/>
    <property type="match status" value="1"/>
</dbReference>
<dbReference type="Pfam" id="PF00156">
    <property type="entry name" value="Pribosyltran"/>
    <property type="match status" value="1"/>
</dbReference>
<dbReference type="SUPFAM" id="SSF53271">
    <property type="entry name" value="PRTase-like"/>
    <property type="match status" value="1"/>
</dbReference>
<protein>
    <recommendedName>
        <fullName>DNA utilization protein YhgH</fullName>
    </recommendedName>
    <alternativeName>
        <fullName>Protein GntX</fullName>
    </alternativeName>
</protein>
<name>GNTX_SALTY</name>
<reference key="1">
    <citation type="journal article" date="2001" name="Nature">
        <title>Complete genome sequence of Salmonella enterica serovar Typhimurium LT2.</title>
        <authorList>
            <person name="McClelland M."/>
            <person name="Sanderson K.E."/>
            <person name="Spieth J."/>
            <person name="Clifton S.W."/>
            <person name="Latreille P."/>
            <person name="Courtney L."/>
            <person name="Porwollik S."/>
            <person name="Ali J."/>
            <person name="Dante M."/>
            <person name="Du F."/>
            <person name="Hou S."/>
            <person name="Layman D."/>
            <person name="Leonard S."/>
            <person name="Nguyen C."/>
            <person name="Scott K."/>
            <person name="Holmes A."/>
            <person name="Grewal N."/>
            <person name="Mulvaney E."/>
            <person name="Ryan E."/>
            <person name="Sun H."/>
            <person name="Florea L."/>
            <person name="Miller W."/>
            <person name="Stoneking T."/>
            <person name="Nhan M."/>
            <person name="Waterston R."/>
            <person name="Wilson R.K."/>
        </authorList>
    </citation>
    <scope>NUCLEOTIDE SEQUENCE [LARGE SCALE GENOMIC DNA]</scope>
    <source>
        <strain>LT2 / SGSC1412 / ATCC 700720</strain>
    </source>
</reference>
<keyword id="KW-1185">Reference proteome</keyword>
<proteinExistence type="inferred from homology"/>
<evidence type="ECO:0000250" key="1"/>
<evidence type="ECO:0000305" key="2"/>
<comment type="function">
    <text evidence="1">Could be involved in gluconate metabolism.</text>
</comment>
<comment type="similarity">
    <text evidence="2">Belongs to the ComF/GntX family.</text>
</comment>
<feature type="chain" id="PRO_0000209462" description="DNA utilization protein YhgH">
    <location>
        <begin position="1"/>
        <end position="227"/>
    </location>
</feature>
<gene>
    <name type="primary">gntX</name>
    <name type="ordered locus">STM3510</name>
</gene>